<proteinExistence type="inferred from homology"/>
<accession>A4XRL4</accession>
<dbReference type="EC" id="4.2.1.41" evidence="1"/>
<dbReference type="EMBL" id="CP000680">
    <property type="protein sequence ID" value="ABP83980.1"/>
    <property type="molecule type" value="Genomic_DNA"/>
</dbReference>
<dbReference type="SMR" id="A4XRL4"/>
<dbReference type="STRING" id="399739.Pmen_1215"/>
<dbReference type="KEGG" id="pmy:Pmen_1215"/>
<dbReference type="PATRIC" id="fig|399739.8.peg.1227"/>
<dbReference type="eggNOG" id="COG0329">
    <property type="taxonomic scope" value="Bacteria"/>
</dbReference>
<dbReference type="HOGENOM" id="CLU_049343_5_2_6"/>
<dbReference type="OrthoDB" id="8995637at2"/>
<dbReference type="UniPathway" id="UPA00564">
    <property type="reaction ID" value="UER00628"/>
</dbReference>
<dbReference type="GO" id="GO:0008840">
    <property type="term" value="F:4-hydroxy-tetrahydrodipicolinate synthase activity"/>
    <property type="evidence" value="ECO:0007669"/>
    <property type="project" value="TreeGrafter"/>
</dbReference>
<dbReference type="GO" id="GO:0047448">
    <property type="term" value="F:5-dehydro-4-deoxyglucarate dehydratase activity"/>
    <property type="evidence" value="ECO:0007669"/>
    <property type="project" value="UniProtKB-UniRule"/>
</dbReference>
<dbReference type="GO" id="GO:0042838">
    <property type="term" value="P:D-glucarate catabolic process"/>
    <property type="evidence" value="ECO:0007669"/>
    <property type="project" value="UniProtKB-UniRule"/>
</dbReference>
<dbReference type="CDD" id="cd00951">
    <property type="entry name" value="KDGDH"/>
    <property type="match status" value="1"/>
</dbReference>
<dbReference type="Gene3D" id="3.20.20.70">
    <property type="entry name" value="Aldolase class I"/>
    <property type="match status" value="1"/>
</dbReference>
<dbReference type="HAMAP" id="MF_00694">
    <property type="entry name" value="KDGDH"/>
    <property type="match status" value="1"/>
</dbReference>
<dbReference type="InterPro" id="IPR013785">
    <property type="entry name" value="Aldolase_TIM"/>
</dbReference>
<dbReference type="InterPro" id="IPR002220">
    <property type="entry name" value="DapA-like"/>
</dbReference>
<dbReference type="InterPro" id="IPR017655">
    <property type="entry name" value="Dehydro-deoxyglucarate_dehyd"/>
</dbReference>
<dbReference type="NCBIfam" id="TIGR03249">
    <property type="entry name" value="KdgD"/>
    <property type="match status" value="1"/>
</dbReference>
<dbReference type="NCBIfam" id="NF002958">
    <property type="entry name" value="PRK03620.1"/>
    <property type="match status" value="1"/>
</dbReference>
<dbReference type="PANTHER" id="PTHR12128:SF19">
    <property type="entry name" value="5-DEHYDRO-4-DEOXYGLUCARATE DEHYDRATASE 2-RELATED"/>
    <property type="match status" value="1"/>
</dbReference>
<dbReference type="PANTHER" id="PTHR12128">
    <property type="entry name" value="DIHYDRODIPICOLINATE SYNTHASE"/>
    <property type="match status" value="1"/>
</dbReference>
<dbReference type="Pfam" id="PF00701">
    <property type="entry name" value="DHDPS"/>
    <property type="match status" value="1"/>
</dbReference>
<dbReference type="PIRSF" id="PIRSF001365">
    <property type="entry name" value="DHDPS"/>
    <property type="match status" value="1"/>
</dbReference>
<dbReference type="SMART" id="SM01130">
    <property type="entry name" value="DHDPS"/>
    <property type="match status" value="1"/>
</dbReference>
<dbReference type="SUPFAM" id="SSF51569">
    <property type="entry name" value="Aldolase"/>
    <property type="match status" value="1"/>
</dbReference>
<reference key="1">
    <citation type="submission" date="2007-04" db="EMBL/GenBank/DDBJ databases">
        <title>Complete sequence of Pseudomonas mendocina ymp.</title>
        <authorList>
            <consortium name="US DOE Joint Genome Institute"/>
            <person name="Copeland A."/>
            <person name="Lucas S."/>
            <person name="Lapidus A."/>
            <person name="Barry K."/>
            <person name="Glavina del Rio T."/>
            <person name="Dalin E."/>
            <person name="Tice H."/>
            <person name="Pitluck S."/>
            <person name="Kiss H."/>
            <person name="Brettin T."/>
            <person name="Detter J.C."/>
            <person name="Bruce D."/>
            <person name="Han C."/>
            <person name="Schmutz J."/>
            <person name="Larimer F."/>
            <person name="Land M."/>
            <person name="Hauser L."/>
            <person name="Kyrpides N."/>
            <person name="Mikhailova N."/>
            <person name="Hersman L."/>
            <person name="Dubois J."/>
            <person name="Maurice P."/>
            <person name="Richardson P."/>
        </authorList>
    </citation>
    <scope>NUCLEOTIDE SEQUENCE [LARGE SCALE GENOMIC DNA]</scope>
    <source>
        <strain>ymp</strain>
    </source>
</reference>
<gene>
    <name type="ordered locus">Pmen_1215</name>
</gene>
<feature type="chain" id="PRO_1000045408" description="Probable 5-dehydro-4-deoxyglucarate dehydratase">
    <location>
        <begin position="1"/>
        <end position="303"/>
    </location>
</feature>
<comment type="catalytic activity">
    <reaction evidence="1">
        <text>5-dehydro-4-deoxy-D-glucarate + H(+) = 2,5-dioxopentanoate + CO2 + H2O</text>
        <dbReference type="Rhea" id="RHEA:24608"/>
        <dbReference type="ChEBI" id="CHEBI:15377"/>
        <dbReference type="ChEBI" id="CHEBI:15378"/>
        <dbReference type="ChEBI" id="CHEBI:16526"/>
        <dbReference type="ChEBI" id="CHEBI:42819"/>
        <dbReference type="ChEBI" id="CHEBI:58136"/>
        <dbReference type="EC" id="4.2.1.41"/>
    </reaction>
</comment>
<comment type="pathway">
    <text evidence="1">Carbohydrate acid metabolism; D-glucarate degradation; 2,5-dioxopentanoate from D-glucarate: step 2/2.</text>
</comment>
<comment type="similarity">
    <text evidence="1">Belongs to the DapA family.</text>
</comment>
<evidence type="ECO:0000255" key="1">
    <source>
        <dbReference type="HAMAP-Rule" id="MF_00694"/>
    </source>
</evidence>
<protein>
    <recommendedName>
        <fullName evidence="1">Probable 5-dehydro-4-deoxyglucarate dehydratase</fullName>
        <ecNumber evidence="1">4.2.1.41</ecNumber>
    </recommendedName>
    <alternativeName>
        <fullName evidence="1">5-keto-4-deoxy-glucarate dehydratase</fullName>
        <shortName evidence="1">KDGDH</shortName>
    </alternativeName>
</protein>
<organism>
    <name type="scientific">Ectopseudomonas mendocina (strain ymp)</name>
    <name type="common">Pseudomonas mendocina</name>
    <dbReference type="NCBI Taxonomy" id="399739"/>
    <lineage>
        <taxon>Bacteria</taxon>
        <taxon>Pseudomonadati</taxon>
        <taxon>Pseudomonadota</taxon>
        <taxon>Gammaproteobacteria</taxon>
        <taxon>Pseudomonadales</taxon>
        <taxon>Pseudomonadaceae</taxon>
        <taxon>Ectopseudomonas</taxon>
    </lineage>
</organism>
<keyword id="KW-0456">Lyase</keyword>
<sequence length="303" mass="32534">MNPQELKSILSSGLLSFPVTDFDAAGDFHQAGYVRRLEWLAPYGASALFAAGGTGEFFSLAPDEYSAVIKTAVDTCEKSVPILAGVGGPTRVAIQMAQEAERLGAKGLLLLPHYLTEASQEGVAAHVEQVCKAVKIGVVIYNRNVCRLNANLLEQLAERCPNLIGYKDGLGDIELMVSIRRRLGERLTYLGGLPTAEVYAAAYKALGVPVYSSAVFNFIPKTAMAFYKAIAADDQATVGKLIDDFFLPYLDIRNRRAGYAVSIVKAGAKIVGYDAGPVRAPLTDLLPEEYEALAKLIEAQGAQ</sequence>
<name>KDGD_ECTM1</name>